<name>GRAS_STAA3</name>
<gene>
    <name type="primary">graS</name>
    <name type="ordered locus">SAUSA300_0646</name>
</gene>
<sequence length="346" mass="41079">MNNLKWVAYFLKSRMNWIFWILFLNFLMLGISLIDYDFPIDSLFYIVSLNLSLTMIFLLLTYFKEVKLYKHFDKDKEIEEIKHKDLAETPFQRHTVDYLYRQISAHKEKVVEQQLQLNMHEQTITEFVHDIKTPVTAMKLLIDQEKNQERKQALLYEWSRINSMLDTQLYITRLESQRKDMYFDYVSLKRMVIDEIQLTRHISQVKGIGFDVDFKVDDYVYTDIKWCRMIIRQILSNALKYSENFNIEIGTELNDQHVSLYIKDYGRGISKKDMPRIFERGFTSTANRNETTSSGMGLYLVNSVKDQLGIHLQVTSTVGKGTTVRLIFPLQNEIVERMSEVTNLSF</sequence>
<keyword id="KW-0046">Antibiotic resistance</keyword>
<keyword id="KW-0067">ATP-binding</keyword>
<keyword id="KW-1003">Cell membrane</keyword>
<keyword id="KW-0418">Kinase</keyword>
<keyword id="KW-0472">Membrane</keyword>
<keyword id="KW-0547">Nucleotide-binding</keyword>
<keyword id="KW-0808">Transferase</keyword>
<keyword id="KW-0812">Transmembrane</keyword>
<keyword id="KW-1133">Transmembrane helix</keyword>
<keyword id="KW-0902">Two-component regulatory system</keyword>
<keyword id="KW-0843">Virulence</keyword>
<proteinExistence type="inferred from homology"/>
<organism>
    <name type="scientific">Staphylococcus aureus (strain USA300)</name>
    <dbReference type="NCBI Taxonomy" id="367830"/>
    <lineage>
        <taxon>Bacteria</taxon>
        <taxon>Bacillati</taxon>
        <taxon>Bacillota</taxon>
        <taxon>Bacilli</taxon>
        <taxon>Bacillales</taxon>
        <taxon>Staphylococcaceae</taxon>
        <taxon>Staphylococcus</taxon>
    </lineage>
</organism>
<dbReference type="EC" id="2.7.13.3"/>
<dbReference type="EMBL" id="CP000255">
    <property type="protein sequence ID" value="ABD22340.1"/>
    <property type="molecule type" value="Genomic_DNA"/>
</dbReference>
<dbReference type="RefSeq" id="WP_001061252.1">
    <property type="nucleotide sequence ID" value="NZ_CP027476.1"/>
</dbReference>
<dbReference type="SMR" id="Q2FIX9"/>
<dbReference type="KEGG" id="saa:SAUSA300_0646"/>
<dbReference type="HOGENOM" id="CLU_000445_13_1_9"/>
<dbReference type="OMA" id="YEWLRIH"/>
<dbReference type="Proteomes" id="UP000001939">
    <property type="component" value="Chromosome"/>
</dbReference>
<dbReference type="GO" id="GO:0005886">
    <property type="term" value="C:plasma membrane"/>
    <property type="evidence" value="ECO:0007669"/>
    <property type="project" value="UniProtKB-SubCell"/>
</dbReference>
<dbReference type="GO" id="GO:0005524">
    <property type="term" value="F:ATP binding"/>
    <property type="evidence" value="ECO:0007669"/>
    <property type="project" value="UniProtKB-KW"/>
</dbReference>
<dbReference type="GO" id="GO:0004721">
    <property type="term" value="F:phosphoprotein phosphatase activity"/>
    <property type="evidence" value="ECO:0007669"/>
    <property type="project" value="TreeGrafter"/>
</dbReference>
<dbReference type="GO" id="GO:0000155">
    <property type="term" value="F:phosphorelay sensor kinase activity"/>
    <property type="evidence" value="ECO:0007669"/>
    <property type="project" value="InterPro"/>
</dbReference>
<dbReference type="GO" id="GO:0016036">
    <property type="term" value="P:cellular response to phosphate starvation"/>
    <property type="evidence" value="ECO:0007669"/>
    <property type="project" value="TreeGrafter"/>
</dbReference>
<dbReference type="GO" id="GO:0046677">
    <property type="term" value="P:response to antibiotic"/>
    <property type="evidence" value="ECO:0007669"/>
    <property type="project" value="UniProtKB-KW"/>
</dbReference>
<dbReference type="Gene3D" id="3.30.565.10">
    <property type="entry name" value="Histidine kinase-like ATPase, C-terminal domain"/>
    <property type="match status" value="1"/>
</dbReference>
<dbReference type="InterPro" id="IPR050351">
    <property type="entry name" value="2-comp_sensor_kinase"/>
</dbReference>
<dbReference type="InterPro" id="IPR036890">
    <property type="entry name" value="HATPase_C_sf"/>
</dbReference>
<dbReference type="InterPro" id="IPR005467">
    <property type="entry name" value="His_kinase_dom"/>
</dbReference>
<dbReference type="InterPro" id="IPR036097">
    <property type="entry name" value="HisK_dim/P_sf"/>
</dbReference>
<dbReference type="InterPro" id="IPR004358">
    <property type="entry name" value="Sig_transdc_His_kin-like_C"/>
</dbReference>
<dbReference type="PANTHER" id="PTHR45453:SF2">
    <property type="entry name" value="HISTIDINE KINASE"/>
    <property type="match status" value="1"/>
</dbReference>
<dbReference type="PANTHER" id="PTHR45453">
    <property type="entry name" value="PHOSPHATE REGULON SENSOR PROTEIN PHOR"/>
    <property type="match status" value="1"/>
</dbReference>
<dbReference type="Pfam" id="PF02518">
    <property type="entry name" value="HATPase_c"/>
    <property type="match status" value="1"/>
</dbReference>
<dbReference type="PRINTS" id="PR00344">
    <property type="entry name" value="BCTRLSENSOR"/>
</dbReference>
<dbReference type="SMART" id="SM00387">
    <property type="entry name" value="HATPase_c"/>
    <property type="match status" value="1"/>
</dbReference>
<dbReference type="SUPFAM" id="SSF55874">
    <property type="entry name" value="ATPase domain of HSP90 chaperone/DNA topoisomerase II/histidine kinase"/>
    <property type="match status" value="1"/>
</dbReference>
<dbReference type="SUPFAM" id="SSF47384">
    <property type="entry name" value="Homodimeric domain of signal transducing histidine kinase"/>
    <property type="match status" value="1"/>
</dbReference>
<dbReference type="PROSITE" id="PS50109">
    <property type="entry name" value="HIS_KIN"/>
    <property type="match status" value="1"/>
</dbReference>
<comment type="function">
    <text evidence="1">Member of the two-component regulatory system GraR/GraS involved in resistance against cationic antimicrobial peptides (CAMPs). Functions as a sensor protein kinase which phosphorylates GraR through the auxiliary protein GraX. In turn, GraR up-regulates many genes such as adhesins, exoproteins, transporters, toxins, and proteins involved in cell wall synthesis. Down-regulates the expression of many genes involved in RNA and amino acid synthesis or glycolysis.</text>
</comment>
<comment type="catalytic activity">
    <reaction>
        <text>ATP + protein L-histidine = ADP + protein N-phospho-L-histidine.</text>
        <dbReference type="EC" id="2.7.13.3"/>
    </reaction>
</comment>
<comment type="subunit">
    <text evidence="1">Interacts with GraX.</text>
</comment>
<comment type="subcellular location">
    <subcellularLocation>
        <location evidence="4">Cell membrane</location>
        <topology evidence="4">Multi-pass membrane protein</topology>
    </subcellularLocation>
</comment>
<protein>
    <recommendedName>
        <fullName>Sensor protein kinase GraS</fullName>
        <ecNumber>2.7.13.3</ecNumber>
    </recommendedName>
    <alternativeName>
        <fullName>Glycopeptide resistance-associated protein S</fullName>
    </alternativeName>
</protein>
<reference key="1">
    <citation type="journal article" date="2006" name="Lancet">
        <title>Complete genome sequence of USA300, an epidemic clone of community-acquired meticillin-resistant Staphylococcus aureus.</title>
        <authorList>
            <person name="Diep B.A."/>
            <person name="Gill S.R."/>
            <person name="Chang R.F."/>
            <person name="Phan T.H."/>
            <person name="Chen J.H."/>
            <person name="Davidson M.G."/>
            <person name="Lin F."/>
            <person name="Lin J."/>
            <person name="Carleton H.A."/>
            <person name="Mongodin E.F."/>
            <person name="Sensabaugh G.F."/>
            <person name="Perdreau-Remington F."/>
        </authorList>
    </citation>
    <scope>NUCLEOTIDE SEQUENCE [LARGE SCALE GENOMIC DNA]</scope>
    <source>
        <strain>USA300</strain>
    </source>
</reference>
<accession>Q2FIX9</accession>
<evidence type="ECO:0000250" key="1">
    <source>
        <dbReference type="UniProtKB" id="Q2G0D9"/>
    </source>
</evidence>
<evidence type="ECO:0000255" key="2"/>
<evidence type="ECO:0000255" key="3">
    <source>
        <dbReference type="PROSITE-ProRule" id="PRU00107"/>
    </source>
</evidence>
<evidence type="ECO:0000305" key="4"/>
<feature type="chain" id="PRO_0000347926" description="Sensor protein kinase GraS">
    <location>
        <begin position="1"/>
        <end position="346"/>
    </location>
</feature>
<feature type="transmembrane region" description="Helical" evidence="2">
    <location>
        <begin position="15"/>
        <end position="35"/>
    </location>
</feature>
<feature type="transmembrane region" description="Helical" evidence="2">
    <location>
        <begin position="43"/>
        <end position="63"/>
    </location>
</feature>
<feature type="domain" description="Histidine kinase" evidence="3">
    <location>
        <begin position="126"/>
        <end position="332"/>
    </location>
</feature>